<comment type="function">
    <text evidence="1">Transfers the gamma-phosphate of ATP to the 4'-position of a tetraacyldisaccharide 1-phosphate intermediate (termed DS-1-P) to form tetraacyldisaccharide 1,4'-bis-phosphate (lipid IVA).</text>
</comment>
<comment type="catalytic activity">
    <reaction evidence="1">
        <text>a lipid A disaccharide + ATP = a lipid IVA + ADP + H(+)</text>
        <dbReference type="Rhea" id="RHEA:67840"/>
        <dbReference type="ChEBI" id="CHEBI:15378"/>
        <dbReference type="ChEBI" id="CHEBI:30616"/>
        <dbReference type="ChEBI" id="CHEBI:176343"/>
        <dbReference type="ChEBI" id="CHEBI:176425"/>
        <dbReference type="ChEBI" id="CHEBI:456216"/>
        <dbReference type="EC" id="2.7.1.130"/>
    </reaction>
</comment>
<comment type="pathway">
    <text evidence="1">Glycolipid biosynthesis; lipid IV(A) biosynthesis; lipid IV(A) from (3R)-3-hydroxytetradecanoyl-[acyl-carrier-protein] and UDP-N-acetyl-alpha-D-glucosamine: step 6/6.</text>
</comment>
<comment type="similarity">
    <text evidence="1">Belongs to the LpxK family.</text>
</comment>
<sequence>MIEKIWSGESPLWRLLLPLSWLYGLVSGAIRLCYKLKLKRAWRAPVPVVVVGNLTAGGNGKTPVVVWLVEQLQQRGIRVGVVSRGYGGKAESYPLLLSADTTTAQAGDEPVLIYQRTDAPVAVSPVRSDAVKAILAQHPDVQIIVTDDGLQHYRLARDVEIVVIDGVRRFGNGWWLPAGPMRERAGRLKSVDAVIVNGGVPRSGEIPMHLLPGQAVNLRTGTRCDVAQLEHVVAMAGIGHPPRFFATLKMCGVQPEKCVPLADHQSLNHADVSALVSAGQTLVMTEKDAVKCRAFAEENWWYLPVDAQLSGDEPAKLLTQLTSLASGN</sequence>
<accession>B7LE13</accession>
<organism>
    <name type="scientific">Escherichia coli (strain 55989 / EAEC)</name>
    <dbReference type="NCBI Taxonomy" id="585055"/>
    <lineage>
        <taxon>Bacteria</taxon>
        <taxon>Pseudomonadati</taxon>
        <taxon>Pseudomonadota</taxon>
        <taxon>Gammaproteobacteria</taxon>
        <taxon>Enterobacterales</taxon>
        <taxon>Enterobacteriaceae</taxon>
        <taxon>Escherichia</taxon>
    </lineage>
</organism>
<reference key="1">
    <citation type="journal article" date="2009" name="PLoS Genet.">
        <title>Organised genome dynamics in the Escherichia coli species results in highly diverse adaptive paths.</title>
        <authorList>
            <person name="Touchon M."/>
            <person name="Hoede C."/>
            <person name="Tenaillon O."/>
            <person name="Barbe V."/>
            <person name="Baeriswyl S."/>
            <person name="Bidet P."/>
            <person name="Bingen E."/>
            <person name="Bonacorsi S."/>
            <person name="Bouchier C."/>
            <person name="Bouvet O."/>
            <person name="Calteau A."/>
            <person name="Chiapello H."/>
            <person name="Clermont O."/>
            <person name="Cruveiller S."/>
            <person name="Danchin A."/>
            <person name="Diard M."/>
            <person name="Dossat C."/>
            <person name="Karoui M.E."/>
            <person name="Frapy E."/>
            <person name="Garry L."/>
            <person name="Ghigo J.M."/>
            <person name="Gilles A.M."/>
            <person name="Johnson J."/>
            <person name="Le Bouguenec C."/>
            <person name="Lescat M."/>
            <person name="Mangenot S."/>
            <person name="Martinez-Jehanne V."/>
            <person name="Matic I."/>
            <person name="Nassif X."/>
            <person name="Oztas S."/>
            <person name="Petit M.A."/>
            <person name="Pichon C."/>
            <person name="Rouy Z."/>
            <person name="Ruf C.S."/>
            <person name="Schneider D."/>
            <person name="Tourret J."/>
            <person name="Vacherie B."/>
            <person name="Vallenet D."/>
            <person name="Medigue C."/>
            <person name="Rocha E.P.C."/>
            <person name="Denamur E."/>
        </authorList>
    </citation>
    <scope>NUCLEOTIDE SEQUENCE [LARGE SCALE GENOMIC DNA]</scope>
    <source>
        <strain>55989 / EAEC</strain>
    </source>
</reference>
<name>LPXK_ECO55</name>
<keyword id="KW-0067">ATP-binding</keyword>
<keyword id="KW-0418">Kinase</keyword>
<keyword id="KW-0441">Lipid A biosynthesis</keyword>
<keyword id="KW-0444">Lipid biosynthesis</keyword>
<keyword id="KW-0443">Lipid metabolism</keyword>
<keyword id="KW-0547">Nucleotide-binding</keyword>
<keyword id="KW-1185">Reference proteome</keyword>
<keyword id="KW-0808">Transferase</keyword>
<proteinExistence type="inferred from homology"/>
<dbReference type="EC" id="2.7.1.130" evidence="1"/>
<dbReference type="EMBL" id="CU928145">
    <property type="protein sequence ID" value="CAU96824.1"/>
    <property type="molecule type" value="Genomic_DNA"/>
</dbReference>
<dbReference type="RefSeq" id="WP_000570540.1">
    <property type="nucleotide sequence ID" value="NC_011748.1"/>
</dbReference>
<dbReference type="SMR" id="B7LE13"/>
<dbReference type="GeneID" id="93776500"/>
<dbReference type="KEGG" id="eck:EC55989_0960"/>
<dbReference type="HOGENOM" id="CLU_038816_2_0_6"/>
<dbReference type="UniPathway" id="UPA00359">
    <property type="reaction ID" value="UER00482"/>
</dbReference>
<dbReference type="Proteomes" id="UP000000746">
    <property type="component" value="Chromosome"/>
</dbReference>
<dbReference type="GO" id="GO:0005886">
    <property type="term" value="C:plasma membrane"/>
    <property type="evidence" value="ECO:0007669"/>
    <property type="project" value="TreeGrafter"/>
</dbReference>
<dbReference type="GO" id="GO:0005524">
    <property type="term" value="F:ATP binding"/>
    <property type="evidence" value="ECO:0007669"/>
    <property type="project" value="UniProtKB-UniRule"/>
</dbReference>
<dbReference type="GO" id="GO:0009029">
    <property type="term" value="F:tetraacyldisaccharide 4'-kinase activity"/>
    <property type="evidence" value="ECO:0007669"/>
    <property type="project" value="UniProtKB-UniRule"/>
</dbReference>
<dbReference type="GO" id="GO:0009245">
    <property type="term" value="P:lipid A biosynthetic process"/>
    <property type="evidence" value="ECO:0007669"/>
    <property type="project" value="UniProtKB-UniRule"/>
</dbReference>
<dbReference type="GO" id="GO:0009244">
    <property type="term" value="P:lipopolysaccharide core region biosynthetic process"/>
    <property type="evidence" value="ECO:0007669"/>
    <property type="project" value="TreeGrafter"/>
</dbReference>
<dbReference type="HAMAP" id="MF_00409">
    <property type="entry name" value="LpxK"/>
    <property type="match status" value="1"/>
</dbReference>
<dbReference type="InterPro" id="IPR003758">
    <property type="entry name" value="LpxK"/>
</dbReference>
<dbReference type="InterPro" id="IPR027417">
    <property type="entry name" value="P-loop_NTPase"/>
</dbReference>
<dbReference type="NCBIfam" id="TIGR00682">
    <property type="entry name" value="lpxK"/>
    <property type="match status" value="1"/>
</dbReference>
<dbReference type="PANTHER" id="PTHR42724">
    <property type="entry name" value="TETRAACYLDISACCHARIDE 4'-KINASE"/>
    <property type="match status" value="1"/>
</dbReference>
<dbReference type="PANTHER" id="PTHR42724:SF1">
    <property type="entry name" value="TETRAACYLDISACCHARIDE 4'-KINASE, MITOCHONDRIAL-RELATED"/>
    <property type="match status" value="1"/>
</dbReference>
<dbReference type="Pfam" id="PF02606">
    <property type="entry name" value="LpxK"/>
    <property type="match status" value="1"/>
</dbReference>
<dbReference type="SUPFAM" id="SSF52540">
    <property type="entry name" value="P-loop containing nucleoside triphosphate hydrolases"/>
    <property type="match status" value="1"/>
</dbReference>
<evidence type="ECO:0000255" key="1">
    <source>
        <dbReference type="HAMAP-Rule" id="MF_00409"/>
    </source>
</evidence>
<feature type="chain" id="PRO_1000134739" description="Tetraacyldisaccharide 4'-kinase">
    <location>
        <begin position="1"/>
        <end position="328"/>
    </location>
</feature>
<feature type="binding site" evidence="1">
    <location>
        <begin position="55"/>
        <end position="62"/>
    </location>
    <ligand>
        <name>ATP</name>
        <dbReference type="ChEBI" id="CHEBI:30616"/>
    </ligand>
</feature>
<protein>
    <recommendedName>
        <fullName evidence="1">Tetraacyldisaccharide 4'-kinase</fullName>
        <ecNumber evidence="1">2.7.1.130</ecNumber>
    </recommendedName>
    <alternativeName>
        <fullName evidence="1">Lipid A 4'-kinase</fullName>
    </alternativeName>
</protein>
<gene>
    <name evidence="1" type="primary">lpxK</name>
    <name type="ordered locus">EC55989_0960</name>
</gene>